<comment type="function">
    <text evidence="1">Specifically methylates the N7 position of guanine in position 527 of 16S rRNA.</text>
</comment>
<comment type="catalytic activity">
    <reaction evidence="1">
        <text>guanosine(527) in 16S rRNA + S-adenosyl-L-methionine = N(7)-methylguanosine(527) in 16S rRNA + S-adenosyl-L-homocysteine</text>
        <dbReference type="Rhea" id="RHEA:42732"/>
        <dbReference type="Rhea" id="RHEA-COMP:10209"/>
        <dbReference type="Rhea" id="RHEA-COMP:10210"/>
        <dbReference type="ChEBI" id="CHEBI:57856"/>
        <dbReference type="ChEBI" id="CHEBI:59789"/>
        <dbReference type="ChEBI" id="CHEBI:74269"/>
        <dbReference type="ChEBI" id="CHEBI:74480"/>
        <dbReference type="EC" id="2.1.1.170"/>
    </reaction>
</comment>
<comment type="subcellular location">
    <subcellularLocation>
        <location evidence="1">Cytoplasm</location>
    </subcellularLocation>
</comment>
<comment type="similarity">
    <text evidence="1">Belongs to the methyltransferase superfamily. RNA methyltransferase RsmG family.</text>
</comment>
<dbReference type="EC" id="2.1.1.170" evidence="1"/>
<dbReference type="EMBL" id="CP000803">
    <property type="protein sequence ID" value="ABU60545.1"/>
    <property type="molecule type" value="Genomic_DNA"/>
</dbReference>
<dbReference type="RefSeq" id="WP_003013997.1">
    <property type="nucleotide sequence ID" value="NC_009749.1"/>
</dbReference>
<dbReference type="SMR" id="A7N992"/>
<dbReference type="KEGG" id="fta:FTA_0067"/>
<dbReference type="HOGENOM" id="CLU_065341_2_2_6"/>
<dbReference type="GO" id="GO:0005829">
    <property type="term" value="C:cytosol"/>
    <property type="evidence" value="ECO:0007669"/>
    <property type="project" value="TreeGrafter"/>
</dbReference>
<dbReference type="GO" id="GO:0070043">
    <property type="term" value="F:rRNA (guanine-N7-)-methyltransferase activity"/>
    <property type="evidence" value="ECO:0007669"/>
    <property type="project" value="UniProtKB-UniRule"/>
</dbReference>
<dbReference type="Gene3D" id="3.40.50.150">
    <property type="entry name" value="Vaccinia Virus protein VP39"/>
    <property type="match status" value="1"/>
</dbReference>
<dbReference type="HAMAP" id="MF_00074">
    <property type="entry name" value="16SrRNA_methyltr_G"/>
    <property type="match status" value="1"/>
</dbReference>
<dbReference type="InterPro" id="IPR003682">
    <property type="entry name" value="rRNA_ssu_MeTfrase_G"/>
</dbReference>
<dbReference type="InterPro" id="IPR029063">
    <property type="entry name" value="SAM-dependent_MTases_sf"/>
</dbReference>
<dbReference type="NCBIfam" id="TIGR00138">
    <property type="entry name" value="rsmG_gidB"/>
    <property type="match status" value="1"/>
</dbReference>
<dbReference type="PANTHER" id="PTHR31760">
    <property type="entry name" value="S-ADENOSYL-L-METHIONINE-DEPENDENT METHYLTRANSFERASES SUPERFAMILY PROTEIN"/>
    <property type="match status" value="1"/>
</dbReference>
<dbReference type="PANTHER" id="PTHR31760:SF0">
    <property type="entry name" value="S-ADENOSYL-L-METHIONINE-DEPENDENT METHYLTRANSFERASES SUPERFAMILY PROTEIN"/>
    <property type="match status" value="1"/>
</dbReference>
<dbReference type="Pfam" id="PF02527">
    <property type="entry name" value="GidB"/>
    <property type="match status" value="1"/>
</dbReference>
<dbReference type="PIRSF" id="PIRSF003078">
    <property type="entry name" value="GidB"/>
    <property type="match status" value="1"/>
</dbReference>
<dbReference type="SUPFAM" id="SSF53335">
    <property type="entry name" value="S-adenosyl-L-methionine-dependent methyltransferases"/>
    <property type="match status" value="1"/>
</dbReference>
<proteinExistence type="inferred from homology"/>
<accession>A7N992</accession>
<sequence>MDIMKDKIRQALSELDILATEVQIDQWLDYLKLLEKWNKVYNMTAIKNIDEMLVKHLFDSLAVAKYIKGDSTVDVGTGGGLPGVVLAILYPQHQFTLVDSVGKKIMFLKNVKKSLSLNNINPLNTRIENLEGNFDNIISRAFSSVDTFYELCKHFLTEHNQMLAMKGRDLEERNLESLPLNIEKYSIKVPFLNAERNLIVMRKKL</sequence>
<organism>
    <name type="scientific">Francisella tularensis subsp. holarctica (strain FTNF002-00 / FTA)</name>
    <dbReference type="NCBI Taxonomy" id="458234"/>
    <lineage>
        <taxon>Bacteria</taxon>
        <taxon>Pseudomonadati</taxon>
        <taxon>Pseudomonadota</taxon>
        <taxon>Gammaproteobacteria</taxon>
        <taxon>Thiotrichales</taxon>
        <taxon>Francisellaceae</taxon>
        <taxon>Francisella</taxon>
    </lineage>
</organism>
<gene>
    <name evidence="1" type="primary">rsmG</name>
    <name type="ordered locus">FTA_0067</name>
</gene>
<protein>
    <recommendedName>
        <fullName evidence="1">Ribosomal RNA small subunit methyltransferase G</fullName>
        <ecNumber evidence="1">2.1.1.170</ecNumber>
    </recommendedName>
    <alternativeName>
        <fullName evidence="1">16S rRNA 7-methylguanosine methyltransferase</fullName>
        <shortName evidence="1">16S rRNA m7G methyltransferase</shortName>
    </alternativeName>
</protein>
<reference key="1">
    <citation type="journal article" date="2009" name="PLoS ONE">
        <title>Complete genome sequence of Francisella tularensis subspecies holarctica FTNF002-00.</title>
        <authorList>
            <person name="Barabote R.D."/>
            <person name="Xie G."/>
            <person name="Brettin T.S."/>
            <person name="Hinrichs S.H."/>
            <person name="Fey P.D."/>
            <person name="Jay J.J."/>
            <person name="Engle J.L."/>
            <person name="Godbole S.D."/>
            <person name="Noronha J.M."/>
            <person name="Scheuermann R.H."/>
            <person name="Zhou L.W."/>
            <person name="Lion C."/>
            <person name="Dempsey M.P."/>
        </authorList>
    </citation>
    <scope>NUCLEOTIDE SEQUENCE [LARGE SCALE GENOMIC DNA]</scope>
    <source>
        <strain>FTNF002-00 / FTA</strain>
    </source>
</reference>
<keyword id="KW-0963">Cytoplasm</keyword>
<keyword id="KW-0489">Methyltransferase</keyword>
<keyword id="KW-0698">rRNA processing</keyword>
<keyword id="KW-0949">S-adenosyl-L-methionine</keyword>
<keyword id="KW-0808">Transferase</keyword>
<name>RSMG_FRATF</name>
<evidence type="ECO:0000255" key="1">
    <source>
        <dbReference type="HAMAP-Rule" id="MF_00074"/>
    </source>
</evidence>
<feature type="chain" id="PRO_1000010146" description="Ribosomal RNA small subunit methyltransferase G">
    <location>
        <begin position="1"/>
        <end position="205"/>
    </location>
</feature>
<feature type="binding site" evidence="1">
    <location>
        <position position="76"/>
    </location>
    <ligand>
        <name>S-adenosyl-L-methionine</name>
        <dbReference type="ChEBI" id="CHEBI:59789"/>
    </ligand>
</feature>
<feature type="binding site" evidence="1">
    <location>
        <position position="81"/>
    </location>
    <ligand>
        <name>S-adenosyl-L-methionine</name>
        <dbReference type="ChEBI" id="CHEBI:59789"/>
    </ligand>
</feature>
<feature type="binding site" evidence="1">
    <location>
        <begin position="127"/>
        <end position="128"/>
    </location>
    <ligand>
        <name>S-adenosyl-L-methionine</name>
        <dbReference type="ChEBI" id="CHEBI:59789"/>
    </ligand>
</feature>
<feature type="binding site" evidence="1">
    <location>
        <position position="140"/>
    </location>
    <ligand>
        <name>S-adenosyl-L-methionine</name>
        <dbReference type="ChEBI" id="CHEBI:59789"/>
    </ligand>
</feature>